<proteinExistence type="evidence at protein level"/>
<sequence>MRSLPFFCRGQVVRGFGRGSKQLGIPTANFPEQVVDNLPADVSTGIYYGWASVGSGDVHKMVVSIGWNPYYKNVKKSMETHIIHTFKEDFYGEILNVAIVGYLRPEKNFDSLESLISAIQGDIEEAKKQLDLPEHLKLKDDNFFQVSKGKIMNGH</sequence>
<feature type="chain" id="PRO_0000194149" description="Riboflavin kinase">
    <location>
        <begin position="1"/>
        <end position="155"/>
    </location>
</feature>
<feature type="active site" description="Nucleophile" evidence="1">
    <location>
        <position position="79"/>
    </location>
</feature>
<feature type="binding site" evidence="2">
    <location>
        <position position="15"/>
    </location>
    <ligand>
        <name>ATP</name>
        <dbReference type="ChEBI" id="CHEBI:30616"/>
    </ligand>
</feature>
<feature type="binding site" evidence="2">
    <location>
        <position position="21"/>
    </location>
    <ligand>
        <name>ATP</name>
        <dbReference type="ChEBI" id="CHEBI:30616"/>
    </ligand>
</feature>
<feature type="binding site" evidence="2">
    <location>
        <position position="27"/>
    </location>
    <ligand>
        <name>ATP</name>
        <dbReference type="ChEBI" id="CHEBI:30616"/>
    </ligand>
</feature>
<feature type="binding site" evidence="2">
    <location>
        <position position="27"/>
    </location>
    <ligand>
        <name>Mg(2+)</name>
        <dbReference type="ChEBI" id="CHEBI:18420"/>
    </ligand>
</feature>
<feature type="binding site" evidence="2">
    <location>
        <position position="29"/>
    </location>
    <ligand>
        <name>ATP</name>
        <dbReference type="ChEBI" id="CHEBI:30616"/>
    </ligand>
</feature>
<feature type="binding site" evidence="2">
    <location>
        <position position="29"/>
    </location>
    <ligand>
        <name>Mg(2+)</name>
        <dbReference type="ChEBI" id="CHEBI:18420"/>
    </ligand>
</feature>
<feature type="binding site" evidence="2">
    <location>
        <position position="82"/>
    </location>
    <ligand>
        <name>ATP</name>
        <dbReference type="ChEBI" id="CHEBI:30616"/>
    </ligand>
</feature>
<feature type="binding site" evidence="2">
    <location>
        <position position="84"/>
    </location>
    <ligand>
        <name>ATP</name>
        <dbReference type="ChEBI" id="CHEBI:30616"/>
    </ligand>
</feature>
<feature type="binding site" evidence="2">
    <location>
        <position position="91"/>
    </location>
    <ligand>
        <name>ATP</name>
        <dbReference type="ChEBI" id="CHEBI:30616"/>
    </ligand>
</feature>
<feature type="binding site" evidence="2">
    <location>
        <position position="104"/>
    </location>
    <ligand>
        <name>FMN</name>
        <dbReference type="ChEBI" id="CHEBI:58210"/>
    </ligand>
</feature>
<feature type="binding site" evidence="2">
    <location>
        <position position="107"/>
    </location>
    <ligand>
        <name>FMN</name>
        <dbReference type="ChEBI" id="CHEBI:58210"/>
    </ligand>
</feature>
<feature type="binding site" evidence="2">
    <location>
        <position position="109"/>
    </location>
    <ligand>
        <name>FMN</name>
        <dbReference type="ChEBI" id="CHEBI:58210"/>
    </ligand>
</feature>
<organism>
    <name type="scientific">Mus musculus</name>
    <name type="common">Mouse</name>
    <dbReference type="NCBI Taxonomy" id="10090"/>
    <lineage>
        <taxon>Eukaryota</taxon>
        <taxon>Metazoa</taxon>
        <taxon>Chordata</taxon>
        <taxon>Craniata</taxon>
        <taxon>Vertebrata</taxon>
        <taxon>Euteleostomi</taxon>
        <taxon>Mammalia</taxon>
        <taxon>Eutheria</taxon>
        <taxon>Euarchontoglires</taxon>
        <taxon>Glires</taxon>
        <taxon>Rodentia</taxon>
        <taxon>Myomorpha</taxon>
        <taxon>Muroidea</taxon>
        <taxon>Muridae</taxon>
        <taxon>Murinae</taxon>
        <taxon>Mus</taxon>
        <taxon>Mus</taxon>
    </lineage>
</organism>
<dbReference type="EC" id="2.7.1.26" evidence="2"/>
<dbReference type="EMBL" id="AK010607">
    <property type="protein sequence ID" value="BAB27057.1"/>
    <property type="molecule type" value="mRNA"/>
</dbReference>
<dbReference type="EMBL" id="AK002806">
    <property type="protein sequence ID" value="BAB22372.1"/>
    <property type="molecule type" value="mRNA"/>
</dbReference>
<dbReference type="EMBL" id="AK008352">
    <property type="protein sequence ID" value="BAB25622.1"/>
    <property type="molecule type" value="mRNA"/>
</dbReference>
<dbReference type="EMBL" id="BC033521">
    <property type="protein sequence ID" value="AAH33521.2"/>
    <property type="molecule type" value="mRNA"/>
</dbReference>
<dbReference type="EMBL" id="BC051021">
    <property type="protein sequence ID" value="AAH51021.1"/>
    <property type="molecule type" value="mRNA"/>
</dbReference>
<dbReference type="EMBL" id="AF031380">
    <property type="protein sequence ID" value="AAB86494.1"/>
    <property type="molecule type" value="Genomic_DNA"/>
</dbReference>
<dbReference type="EMBL" id="AF031381">
    <property type="protein sequence ID" value="AAB86495.1"/>
    <property type="molecule type" value="Genomic_DNA"/>
</dbReference>
<dbReference type="CCDS" id="CCDS29688.1"/>
<dbReference type="RefSeq" id="NP_062310.1">
    <property type="nucleotide sequence ID" value="NM_019437.3"/>
</dbReference>
<dbReference type="SMR" id="Q8CFV9"/>
<dbReference type="BioGRID" id="207641">
    <property type="interactions" value="5"/>
</dbReference>
<dbReference type="DIP" id="DIP-60455N"/>
<dbReference type="FunCoup" id="Q8CFV9">
    <property type="interactions" value="2179"/>
</dbReference>
<dbReference type="IntAct" id="Q8CFV9">
    <property type="interactions" value="3"/>
</dbReference>
<dbReference type="STRING" id="10090.ENSMUSP00000025617"/>
<dbReference type="PhosphoSitePlus" id="Q8CFV9"/>
<dbReference type="PaxDb" id="10090-ENSMUSP00000025617"/>
<dbReference type="PeptideAtlas" id="Q8CFV9"/>
<dbReference type="ProteomicsDB" id="253242"/>
<dbReference type="Pumba" id="Q8CFV9"/>
<dbReference type="Antibodypedia" id="27259">
    <property type="antibodies" value="154 antibodies from 24 providers"/>
</dbReference>
<dbReference type="DNASU" id="54391"/>
<dbReference type="Ensembl" id="ENSMUST00000025617.4">
    <property type="protein sequence ID" value="ENSMUSP00000025617.4"/>
    <property type="gene ID" value="ENSMUSG00000024712.10"/>
</dbReference>
<dbReference type="GeneID" id="54391"/>
<dbReference type="KEGG" id="mmu:54391"/>
<dbReference type="UCSC" id="uc008gxo.2">
    <property type="organism name" value="mouse"/>
</dbReference>
<dbReference type="AGR" id="MGI:1914688"/>
<dbReference type="CTD" id="55312"/>
<dbReference type="MGI" id="MGI:1914688">
    <property type="gene designation" value="Rfk"/>
</dbReference>
<dbReference type="VEuPathDB" id="HostDB:ENSMUSG00000024712"/>
<dbReference type="eggNOG" id="KOG3110">
    <property type="taxonomic scope" value="Eukaryota"/>
</dbReference>
<dbReference type="GeneTree" id="ENSGT00390000015537"/>
<dbReference type="HOGENOM" id="CLU_048437_3_3_1"/>
<dbReference type="InParanoid" id="Q8CFV9"/>
<dbReference type="OMA" id="NGEVHKM"/>
<dbReference type="OrthoDB" id="276388at2759"/>
<dbReference type="PhylomeDB" id="Q8CFV9"/>
<dbReference type="TreeFam" id="TF313786"/>
<dbReference type="Reactome" id="R-MMU-196843">
    <property type="pathway name" value="Vitamin B2 (riboflavin) metabolism"/>
</dbReference>
<dbReference type="UniPathway" id="UPA00276">
    <property type="reaction ID" value="UER00406"/>
</dbReference>
<dbReference type="BioGRID-ORCS" id="54391">
    <property type="hits" value="26 hits in 79 CRISPR screens"/>
</dbReference>
<dbReference type="ChiTaRS" id="Rfk">
    <property type="organism name" value="mouse"/>
</dbReference>
<dbReference type="PRO" id="PR:Q8CFV9"/>
<dbReference type="Proteomes" id="UP000000589">
    <property type="component" value="Chromosome 19"/>
</dbReference>
<dbReference type="RNAct" id="Q8CFV9">
    <property type="molecule type" value="protein"/>
</dbReference>
<dbReference type="Bgee" id="ENSMUSG00000024712">
    <property type="expression patterns" value="Expressed in right colon and 265 other cell types or tissues"/>
</dbReference>
<dbReference type="GO" id="GO:0005829">
    <property type="term" value="C:cytosol"/>
    <property type="evidence" value="ECO:0000314"/>
    <property type="project" value="MGI"/>
</dbReference>
<dbReference type="GO" id="GO:0005739">
    <property type="term" value="C:mitochondrion"/>
    <property type="evidence" value="ECO:0007005"/>
    <property type="project" value="MGI"/>
</dbReference>
<dbReference type="GO" id="GO:0005524">
    <property type="term" value="F:ATP binding"/>
    <property type="evidence" value="ECO:0007669"/>
    <property type="project" value="UniProtKB-KW"/>
</dbReference>
<dbReference type="GO" id="GO:0046872">
    <property type="term" value="F:metal ion binding"/>
    <property type="evidence" value="ECO:0007669"/>
    <property type="project" value="UniProtKB-KW"/>
</dbReference>
<dbReference type="GO" id="GO:0008531">
    <property type="term" value="F:riboflavin kinase activity"/>
    <property type="evidence" value="ECO:0000250"/>
    <property type="project" value="UniProtKB"/>
</dbReference>
<dbReference type="GO" id="GO:0006915">
    <property type="term" value="P:apoptotic process"/>
    <property type="evidence" value="ECO:0000266"/>
    <property type="project" value="MGI"/>
</dbReference>
<dbReference type="GO" id="GO:0072388">
    <property type="term" value="P:flavin adenine dinucleotide biosynthetic process"/>
    <property type="evidence" value="ECO:0000315"/>
    <property type="project" value="MGI"/>
</dbReference>
<dbReference type="GO" id="GO:0009398">
    <property type="term" value="P:FMN biosynthetic process"/>
    <property type="evidence" value="ECO:0007669"/>
    <property type="project" value="UniProtKB-UniPathway"/>
</dbReference>
<dbReference type="GO" id="GO:0072593">
    <property type="term" value="P:reactive oxygen species metabolic process"/>
    <property type="evidence" value="ECO:0000316"/>
    <property type="project" value="MGI"/>
</dbReference>
<dbReference type="GO" id="GO:0009231">
    <property type="term" value="P:riboflavin biosynthetic process"/>
    <property type="evidence" value="ECO:0007669"/>
    <property type="project" value="InterPro"/>
</dbReference>
<dbReference type="GO" id="GO:0006771">
    <property type="term" value="P:riboflavin metabolic process"/>
    <property type="evidence" value="ECO:0000315"/>
    <property type="project" value="MGI"/>
</dbReference>
<dbReference type="FunFam" id="2.40.30.30:FF:000002">
    <property type="entry name" value="Riboflavin kinase, putative"/>
    <property type="match status" value="1"/>
</dbReference>
<dbReference type="Gene3D" id="2.40.30.30">
    <property type="entry name" value="Riboflavin kinase-like"/>
    <property type="match status" value="1"/>
</dbReference>
<dbReference type="InterPro" id="IPR023468">
    <property type="entry name" value="Riboflavin_kinase"/>
</dbReference>
<dbReference type="InterPro" id="IPR015865">
    <property type="entry name" value="Riboflavin_kinase_bac/euk"/>
</dbReference>
<dbReference type="InterPro" id="IPR023465">
    <property type="entry name" value="Riboflavin_kinase_dom_sf"/>
</dbReference>
<dbReference type="PANTHER" id="PTHR22749:SF6">
    <property type="entry name" value="RIBOFLAVIN KINASE"/>
    <property type="match status" value="1"/>
</dbReference>
<dbReference type="PANTHER" id="PTHR22749">
    <property type="entry name" value="RIBOFLAVIN KINASE/FMN ADENYLYLTRANSFERASE"/>
    <property type="match status" value="1"/>
</dbReference>
<dbReference type="Pfam" id="PF01687">
    <property type="entry name" value="Flavokinase"/>
    <property type="match status" value="1"/>
</dbReference>
<dbReference type="SMART" id="SM00904">
    <property type="entry name" value="Flavokinase"/>
    <property type="match status" value="1"/>
</dbReference>
<dbReference type="SUPFAM" id="SSF82114">
    <property type="entry name" value="Riboflavin kinase-like"/>
    <property type="match status" value="1"/>
</dbReference>
<reference key="1">
    <citation type="journal article" date="2005" name="Science">
        <title>The transcriptional landscape of the mammalian genome.</title>
        <authorList>
            <person name="Carninci P."/>
            <person name="Kasukawa T."/>
            <person name="Katayama S."/>
            <person name="Gough J."/>
            <person name="Frith M.C."/>
            <person name="Maeda N."/>
            <person name="Oyama R."/>
            <person name="Ravasi T."/>
            <person name="Lenhard B."/>
            <person name="Wells C."/>
            <person name="Kodzius R."/>
            <person name="Shimokawa K."/>
            <person name="Bajic V.B."/>
            <person name="Brenner S.E."/>
            <person name="Batalov S."/>
            <person name="Forrest A.R."/>
            <person name="Zavolan M."/>
            <person name="Davis M.J."/>
            <person name="Wilming L.G."/>
            <person name="Aidinis V."/>
            <person name="Allen J.E."/>
            <person name="Ambesi-Impiombato A."/>
            <person name="Apweiler R."/>
            <person name="Aturaliya R.N."/>
            <person name="Bailey T.L."/>
            <person name="Bansal M."/>
            <person name="Baxter L."/>
            <person name="Beisel K.W."/>
            <person name="Bersano T."/>
            <person name="Bono H."/>
            <person name="Chalk A.M."/>
            <person name="Chiu K.P."/>
            <person name="Choudhary V."/>
            <person name="Christoffels A."/>
            <person name="Clutterbuck D.R."/>
            <person name="Crowe M.L."/>
            <person name="Dalla E."/>
            <person name="Dalrymple B.P."/>
            <person name="de Bono B."/>
            <person name="Della Gatta G."/>
            <person name="di Bernardo D."/>
            <person name="Down T."/>
            <person name="Engstrom P."/>
            <person name="Fagiolini M."/>
            <person name="Faulkner G."/>
            <person name="Fletcher C.F."/>
            <person name="Fukushima T."/>
            <person name="Furuno M."/>
            <person name="Futaki S."/>
            <person name="Gariboldi M."/>
            <person name="Georgii-Hemming P."/>
            <person name="Gingeras T.R."/>
            <person name="Gojobori T."/>
            <person name="Green R.E."/>
            <person name="Gustincich S."/>
            <person name="Harbers M."/>
            <person name="Hayashi Y."/>
            <person name="Hensch T.K."/>
            <person name="Hirokawa N."/>
            <person name="Hill D."/>
            <person name="Huminiecki L."/>
            <person name="Iacono M."/>
            <person name="Ikeo K."/>
            <person name="Iwama A."/>
            <person name="Ishikawa T."/>
            <person name="Jakt M."/>
            <person name="Kanapin A."/>
            <person name="Katoh M."/>
            <person name="Kawasawa Y."/>
            <person name="Kelso J."/>
            <person name="Kitamura H."/>
            <person name="Kitano H."/>
            <person name="Kollias G."/>
            <person name="Krishnan S.P."/>
            <person name="Kruger A."/>
            <person name="Kummerfeld S.K."/>
            <person name="Kurochkin I.V."/>
            <person name="Lareau L.F."/>
            <person name="Lazarevic D."/>
            <person name="Lipovich L."/>
            <person name="Liu J."/>
            <person name="Liuni S."/>
            <person name="McWilliam S."/>
            <person name="Madan Babu M."/>
            <person name="Madera M."/>
            <person name="Marchionni L."/>
            <person name="Matsuda H."/>
            <person name="Matsuzawa S."/>
            <person name="Miki H."/>
            <person name="Mignone F."/>
            <person name="Miyake S."/>
            <person name="Morris K."/>
            <person name="Mottagui-Tabar S."/>
            <person name="Mulder N."/>
            <person name="Nakano N."/>
            <person name="Nakauchi H."/>
            <person name="Ng P."/>
            <person name="Nilsson R."/>
            <person name="Nishiguchi S."/>
            <person name="Nishikawa S."/>
            <person name="Nori F."/>
            <person name="Ohara O."/>
            <person name="Okazaki Y."/>
            <person name="Orlando V."/>
            <person name="Pang K.C."/>
            <person name="Pavan W.J."/>
            <person name="Pavesi G."/>
            <person name="Pesole G."/>
            <person name="Petrovsky N."/>
            <person name="Piazza S."/>
            <person name="Reed J."/>
            <person name="Reid J.F."/>
            <person name="Ring B.Z."/>
            <person name="Ringwald M."/>
            <person name="Rost B."/>
            <person name="Ruan Y."/>
            <person name="Salzberg S.L."/>
            <person name="Sandelin A."/>
            <person name="Schneider C."/>
            <person name="Schoenbach C."/>
            <person name="Sekiguchi K."/>
            <person name="Semple C.A."/>
            <person name="Seno S."/>
            <person name="Sessa L."/>
            <person name="Sheng Y."/>
            <person name="Shibata Y."/>
            <person name="Shimada H."/>
            <person name="Shimada K."/>
            <person name="Silva D."/>
            <person name="Sinclair B."/>
            <person name="Sperling S."/>
            <person name="Stupka E."/>
            <person name="Sugiura K."/>
            <person name="Sultana R."/>
            <person name="Takenaka Y."/>
            <person name="Taki K."/>
            <person name="Tammoja K."/>
            <person name="Tan S.L."/>
            <person name="Tang S."/>
            <person name="Taylor M.S."/>
            <person name="Tegner J."/>
            <person name="Teichmann S.A."/>
            <person name="Ueda H.R."/>
            <person name="van Nimwegen E."/>
            <person name="Verardo R."/>
            <person name="Wei C.L."/>
            <person name="Yagi K."/>
            <person name="Yamanishi H."/>
            <person name="Zabarovsky E."/>
            <person name="Zhu S."/>
            <person name="Zimmer A."/>
            <person name="Hide W."/>
            <person name="Bult C."/>
            <person name="Grimmond S.M."/>
            <person name="Teasdale R.D."/>
            <person name="Liu E.T."/>
            <person name="Brusic V."/>
            <person name="Quackenbush J."/>
            <person name="Wahlestedt C."/>
            <person name="Mattick J.S."/>
            <person name="Hume D.A."/>
            <person name="Kai C."/>
            <person name="Sasaki D."/>
            <person name="Tomaru Y."/>
            <person name="Fukuda S."/>
            <person name="Kanamori-Katayama M."/>
            <person name="Suzuki M."/>
            <person name="Aoki J."/>
            <person name="Arakawa T."/>
            <person name="Iida J."/>
            <person name="Imamura K."/>
            <person name="Itoh M."/>
            <person name="Kato T."/>
            <person name="Kawaji H."/>
            <person name="Kawagashira N."/>
            <person name="Kawashima T."/>
            <person name="Kojima M."/>
            <person name="Kondo S."/>
            <person name="Konno H."/>
            <person name="Nakano K."/>
            <person name="Ninomiya N."/>
            <person name="Nishio T."/>
            <person name="Okada M."/>
            <person name="Plessy C."/>
            <person name="Shibata K."/>
            <person name="Shiraki T."/>
            <person name="Suzuki S."/>
            <person name="Tagami M."/>
            <person name="Waki K."/>
            <person name="Watahiki A."/>
            <person name="Okamura-Oho Y."/>
            <person name="Suzuki H."/>
            <person name="Kawai J."/>
            <person name="Hayashizaki Y."/>
        </authorList>
    </citation>
    <scope>NUCLEOTIDE SEQUENCE [LARGE SCALE MRNA]</scope>
    <source>
        <strain>C57BL/6J</strain>
        <tissue>Embryonic stem cell</tissue>
        <tissue>Kidney</tissue>
        <tissue>Small intestine</tissue>
    </source>
</reference>
<reference key="2">
    <citation type="journal article" date="2004" name="Genome Res.">
        <title>The status, quality, and expansion of the NIH full-length cDNA project: the Mammalian Gene Collection (MGC).</title>
        <authorList>
            <consortium name="The MGC Project Team"/>
        </authorList>
    </citation>
    <scope>NUCLEOTIDE SEQUENCE [LARGE SCALE MRNA]</scope>
    <source>
        <tissue>Olfactory epithelium</tissue>
        <tissue>Retina</tissue>
    </source>
</reference>
<reference key="3">
    <citation type="submission" date="1997-10" db="EMBL/GenBank/DDBJ databases">
        <authorList>
            <person name="Abrantes E.F."/>
            <person name="Silva A.M."/>
            <person name="Reis L.F.L."/>
        </authorList>
    </citation>
    <scope>NUCLEOTIDE SEQUENCE [GENOMIC DNA] OF 79-112 AND 114-155</scope>
    <source>
        <strain>129/Sv</strain>
    </source>
</reference>
<reference key="4">
    <citation type="journal article" date="2009" name="Nature">
        <title>Riboflavin kinase couples TNF receptor 1 to NADPH oxidase.</title>
        <authorList>
            <person name="Yazdanpanah B."/>
            <person name="Wiegmann K."/>
            <person name="Tchikov V."/>
            <person name="Krut O."/>
            <person name="Pongratz C."/>
            <person name="Schramm M."/>
            <person name="Kleinridders A."/>
            <person name="Wunderlich T."/>
            <person name="Kashkar H."/>
            <person name="Utermoehlen O."/>
            <person name="Bruening J.C."/>
            <person name="Schuetze S."/>
            <person name="Kroenke M."/>
        </authorList>
    </citation>
    <scope>INTERACTION WITH CYBA; TNFRSF1A AND TRADD</scope>
    <scope>DISRUPTION PHENOTYPE</scope>
</reference>
<reference key="5">
    <citation type="journal article" date="2010" name="Cell">
        <title>A tissue-specific atlas of mouse protein phosphorylation and expression.</title>
        <authorList>
            <person name="Huttlin E.L."/>
            <person name="Jedrychowski M.P."/>
            <person name="Elias J.E."/>
            <person name="Goswami T."/>
            <person name="Rad R."/>
            <person name="Beausoleil S.A."/>
            <person name="Villen J."/>
            <person name="Haas W."/>
            <person name="Sowa M.E."/>
            <person name="Gygi S.P."/>
        </authorList>
    </citation>
    <scope>IDENTIFICATION BY MASS SPECTROMETRY [LARGE SCALE ANALYSIS]</scope>
    <source>
        <tissue>Brain</tissue>
        <tissue>Lung</tissue>
        <tissue>Pancreas</tissue>
        <tissue>Spleen</tissue>
    </source>
</reference>
<protein>
    <recommendedName>
        <fullName evidence="2">Riboflavin kinase</fullName>
        <ecNumber evidence="2">2.7.1.26</ecNumber>
    </recommendedName>
    <alternativeName>
        <fullName>ATP:riboflavin 5'-phosphotransferase</fullName>
    </alternativeName>
    <alternativeName>
        <fullName>Flavokinase</fullName>
    </alternativeName>
    <alternativeName>
        <fullName>KOI-4</fullName>
    </alternativeName>
</protein>
<evidence type="ECO:0000250" key="1"/>
<evidence type="ECO:0000250" key="2">
    <source>
        <dbReference type="UniProtKB" id="Q969G6"/>
    </source>
</evidence>
<evidence type="ECO:0000269" key="3">
    <source>
    </source>
</evidence>
<gene>
    <name type="primary">Rfk</name>
</gene>
<accession>Q8CFV9</accession>
<accession>O35471</accession>
<accession>O35472</accession>
<accession>Q9CQ95</accession>
<comment type="function">
    <text evidence="2">Catalyzes the phosphorylation of riboflavin (vitamin B2) to form flavin-mononucleotide (FMN), hence rate-limiting enzyme in the synthesis of FAD. Essential for TNF-induced reactive oxygen species (ROS) production. Through its interaction with both TNFRSF1A and CYBA, physically and functionally couples TNFRSF1A to NADPH oxidase. TNF-activation of RFK may enhance the incorporation of FAD in NADPH oxidase, a critical step for the assembly and activation of NADPH oxidase (By similarity).</text>
</comment>
<comment type="catalytic activity">
    <reaction evidence="2">
        <text>riboflavin + ATP = FMN + ADP + H(+)</text>
        <dbReference type="Rhea" id="RHEA:14357"/>
        <dbReference type="ChEBI" id="CHEBI:15378"/>
        <dbReference type="ChEBI" id="CHEBI:30616"/>
        <dbReference type="ChEBI" id="CHEBI:57986"/>
        <dbReference type="ChEBI" id="CHEBI:58210"/>
        <dbReference type="ChEBI" id="CHEBI:456216"/>
        <dbReference type="EC" id="2.7.1.26"/>
    </reaction>
    <physiologicalReaction direction="left-to-right" evidence="2">
        <dbReference type="Rhea" id="RHEA:14358"/>
    </physiologicalReaction>
</comment>
<comment type="cofactor">
    <cofactor evidence="1">
        <name>Zn(2+)</name>
        <dbReference type="ChEBI" id="CHEBI:29105"/>
    </cofactor>
    <cofactor evidence="2">
        <name>Mg(2+)</name>
        <dbReference type="ChEBI" id="CHEBI:18420"/>
    </cofactor>
    <text evidence="1">Zinc or magnesium.</text>
</comment>
<comment type="pathway">
    <text evidence="2">Cofactor biosynthesis; FMN biosynthesis; FMN from riboflavin (ATP route): step 1/1.</text>
</comment>
<comment type="subunit">
    <text evidence="2 3">Monomer (By similarity). Directly interacts with TNFRSF1A death domain; this interaction may be supported by TRADD (PubMed:19641494). In the absence of TNFRSF1A, interacts with TRADD (PubMed:19641494). Independently of TNFRSF1A, interacts with the NADPH oxidase subunit CYBA (PubMed:19641494).</text>
</comment>
<comment type="subcellular location">
    <subcellularLocation>
        <location evidence="1">Cytoplasm</location>
    </subcellularLocation>
</comment>
<comment type="disruption phenotype">
    <text evidence="3">Mutant embryos die in utero before 7.5 dpc.</text>
</comment>
<keyword id="KW-0067">ATP-binding</keyword>
<keyword id="KW-0963">Cytoplasm</keyword>
<keyword id="KW-0285">Flavoprotein</keyword>
<keyword id="KW-0288">FMN</keyword>
<keyword id="KW-0418">Kinase</keyword>
<keyword id="KW-0460">Magnesium</keyword>
<keyword id="KW-0479">Metal-binding</keyword>
<keyword id="KW-0547">Nucleotide-binding</keyword>
<keyword id="KW-1185">Reference proteome</keyword>
<keyword id="KW-0808">Transferase</keyword>
<keyword id="KW-0862">Zinc</keyword>
<name>RIFK_MOUSE</name>